<comment type="function">
    <text evidence="1">The glycine cleavage system catalyzes the degradation of glycine. The H protein shuttles the methylamine group of glycine from the P protein to the T protein.</text>
</comment>
<comment type="cofactor">
    <cofactor evidence="1">
        <name>(R)-lipoate</name>
        <dbReference type="ChEBI" id="CHEBI:83088"/>
    </cofactor>
    <text evidence="1">Binds 1 lipoyl cofactor covalently.</text>
</comment>
<comment type="subunit">
    <text evidence="1">The glycine cleavage system is composed of four proteins: P, T, L and H.</text>
</comment>
<comment type="similarity">
    <text evidence="1">Belongs to the GcvH family.</text>
</comment>
<organism>
    <name type="scientific">Pseudomonas syringae pv. tomato (strain ATCC BAA-871 / DC3000)</name>
    <dbReference type="NCBI Taxonomy" id="223283"/>
    <lineage>
        <taxon>Bacteria</taxon>
        <taxon>Pseudomonadati</taxon>
        <taxon>Pseudomonadota</taxon>
        <taxon>Gammaproteobacteria</taxon>
        <taxon>Pseudomonadales</taxon>
        <taxon>Pseudomonadaceae</taxon>
        <taxon>Pseudomonas</taxon>
    </lineage>
</organism>
<name>GCSH2_PSESM</name>
<evidence type="ECO:0000255" key="1">
    <source>
        <dbReference type="HAMAP-Rule" id="MF_00272"/>
    </source>
</evidence>
<evidence type="ECO:0000255" key="2">
    <source>
        <dbReference type="PROSITE-ProRule" id="PRU01066"/>
    </source>
</evidence>
<reference key="1">
    <citation type="journal article" date="2003" name="Proc. Natl. Acad. Sci. U.S.A.">
        <title>The complete genome sequence of the Arabidopsis and tomato pathogen Pseudomonas syringae pv. tomato DC3000.</title>
        <authorList>
            <person name="Buell C.R."/>
            <person name="Joardar V."/>
            <person name="Lindeberg M."/>
            <person name="Selengut J."/>
            <person name="Paulsen I.T."/>
            <person name="Gwinn M.L."/>
            <person name="Dodson R.J."/>
            <person name="DeBoy R.T."/>
            <person name="Durkin A.S."/>
            <person name="Kolonay J.F."/>
            <person name="Madupu R."/>
            <person name="Daugherty S.C."/>
            <person name="Brinkac L.M."/>
            <person name="Beanan M.J."/>
            <person name="Haft D.H."/>
            <person name="Nelson W.C."/>
            <person name="Davidsen T.M."/>
            <person name="Zafar N."/>
            <person name="Zhou L."/>
            <person name="Liu J."/>
            <person name="Yuan Q."/>
            <person name="Khouri H.M."/>
            <person name="Fedorova N.B."/>
            <person name="Tran B."/>
            <person name="Russell D."/>
            <person name="Berry K.J."/>
            <person name="Utterback T.R."/>
            <person name="Van Aken S.E."/>
            <person name="Feldblyum T.V."/>
            <person name="D'Ascenzo M."/>
            <person name="Deng W.-L."/>
            <person name="Ramos A.R."/>
            <person name="Alfano J.R."/>
            <person name="Cartinhour S."/>
            <person name="Chatterjee A.K."/>
            <person name="Delaney T.P."/>
            <person name="Lazarowitz S.G."/>
            <person name="Martin G.B."/>
            <person name="Schneider D.J."/>
            <person name="Tang X."/>
            <person name="Bender C.L."/>
            <person name="White O."/>
            <person name="Fraser C.M."/>
            <person name="Collmer A."/>
        </authorList>
    </citation>
    <scope>NUCLEOTIDE SEQUENCE [LARGE SCALE GENOMIC DNA]</scope>
    <source>
        <strain>ATCC BAA-871 / DC3000</strain>
    </source>
</reference>
<protein>
    <recommendedName>
        <fullName evidence="1">Glycine cleavage system H protein 2</fullName>
    </recommendedName>
</protein>
<feature type="chain" id="PRO_0000166238" description="Glycine cleavage system H protein 2">
    <location>
        <begin position="1"/>
        <end position="128"/>
    </location>
</feature>
<feature type="domain" description="Lipoyl-binding" evidence="2">
    <location>
        <begin position="24"/>
        <end position="105"/>
    </location>
</feature>
<feature type="modified residue" description="N6-lipoyllysine" evidence="1">
    <location>
        <position position="65"/>
    </location>
</feature>
<gene>
    <name evidence="1" type="primary">gcvH2</name>
    <name type="synonym">gcvH-2</name>
    <name type="ordered locus">PSPTO_0317</name>
</gene>
<dbReference type="EMBL" id="AE016853">
    <property type="protein sequence ID" value="AAO53862.1"/>
    <property type="molecule type" value="Genomic_DNA"/>
</dbReference>
<dbReference type="RefSeq" id="NP_790167.1">
    <property type="nucleotide sequence ID" value="NC_004578.1"/>
</dbReference>
<dbReference type="SMR" id="Q88AR9"/>
<dbReference type="STRING" id="223283.PSPTO_0317"/>
<dbReference type="GeneID" id="1181926"/>
<dbReference type="KEGG" id="pst:PSPTO_0317"/>
<dbReference type="PATRIC" id="fig|223283.9.peg.330"/>
<dbReference type="eggNOG" id="COG0509">
    <property type="taxonomic scope" value="Bacteria"/>
</dbReference>
<dbReference type="HOGENOM" id="CLU_097408_2_1_6"/>
<dbReference type="OrthoDB" id="9796712at2"/>
<dbReference type="PhylomeDB" id="Q88AR9"/>
<dbReference type="Proteomes" id="UP000002515">
    <property type="component" value="Chromosome"/>
</dbReference>
<dbReference type="GO" id="GO:0005829">
    <property type="term" value="C:cytosol"/>
    <property type="evidence" value="ECO:0007669"/>
    <property type="project" value="TreeGrafter"/>
</dbReference>
<dbReference type="GO" id="GO:0005960">
    <property type="term" value="C:glycine cleavage complex"/>
    <property type="evidence" value="ECO:0007669"/>
    <property type="project" value="InterPro"/>
</dbReference>
<dbReference type="GO" id="GO:0019464">
    <property type="term" value="P:glycine decarboxylation via glycine cleavage system"/>
    <property type="evidence" value="ECO:0007669"/>
    <property type="project" value="UniProtKB-UniRule"/>
</dbReference>
<dbReference type="CDD" id="cd06848">
    <property type="entry name" value="GCS_H"/>
    <property type="match status" value="1"/>
</dbReference>
<dbReference type="Gene3D" id="2.40.50.100">
    <property type="match status" value="1"/>
</dbReference>
<dbReference type="HAMAP" id="MF_00272">
    <property type="entry name" value="GcvH"/>
    <property type="match status" value="1"/>
</dbReference>
<dbReference type="InterPro" id="IPR003016">
    <property type="entry name" value="2-oxoA_DH_lipoyl-BS"/>
</dbReference>
<dbReference type="InterPro" id="IPR000089">
    <property type="entry name" value="Biotin_lipoyl"/>
</dbReference>
<dbReference type="InterPro" id="IPR002930">
    <property type="entry name" value="GCV_H"/>
</dbReference>
<dbReference type="InterPro" id="IPR033753">
    <property type="entry name" value="GCV_H/Fam206"/>
</dbReference>
<dbReference type="InterPro" id="IPR017453">
    <property type="entry name" value="GCV_H_sub"/>
</dbReference>
<dbReference type="InterPro" id="IPR011053">
    <property type="entry name" value="Single_hybrid_motif"/>
</dbReference>
<dbReference type="NCBIfam" id="TIGR00527">
    <property type="entry name" value="gcvH"/>
    <property type="match status" value="1"/>
</dbReference>
<dbReference type="NCBIfam" id="NF002270">
    <property type="entry name" value="PRK01202.1"/>
    <property type="match status" value="1"/>
</dbReference>
<dbReference type="PANTHER" id="PTHR11715">
    <property type="entry name" value="GLYCINE CLEAVAGE SYSTEM H PROTEIN"/>
    <property type="match status" value="1"/>
</dbReference>
<dbReference type="PANTHER" id="PTHR11715:SF3">
    <property type="entry name" value="GLYCINE CLEAVAGE SYSTEM H PROTEIN-RELATED"/>
    <property type="match status" value="1"/>
</dbReference>
<dbReference type="Pfam" id="PF01597">
    <property type="entry name" value="GCV_H"/>
    <property type="match status" value="1"/>
</dbReference>
<dbReference type="SUPFAM" id="SSF51230">
    <property type="entry name" value="Single hybrid motif"/>
    <property type="match status" value="1"/>
</dbReference>
<dbReference type="PROSITE" id="PS50968">
    <property type="entry name" value="BIOTINYL_LIPOYL"/>
    <property type="match status" value="1"/>
</dbReference>
<dbReference type="PROSITE" id="PS00189">
    <property type="entry name" value="LIPOYL"/>
    <property type="match status" value="1"/>
</dbReference>
<sequence>MSNIPAELRFAESHEWARLEADGTVTVGISDHAQEALGDVVFVELPEIGKVFAAGDVAGVVESVKAASDIYSPVAGEVVEVNEALGDSPESLNSEPYSAWIFKVKPASAEADLAKLLDAAGYKGAIGE</sequence>
<accession>Q88AR9</accession>
<keyword id="KW-0450">Lipoyl</keyword>
<keyword id="KW-1185">Reference proteome</keyword>
<proteinExistence type="inferred from homology"/>